<evidence type="ECO:0000250" key="1">
    <source>
        <dbReference type="UniProtKB" id="Q8R1Z4"/>
    </source>
</evidence>
<evidence type="ECO:0000303" key="2">
    <source>
    </source>
</evidence>
<evidence type="ECO:0000305" key="3"/>
<evidence type="ECO:0000312" key="4">
    <source>
        <dbReference type="HGNC" id="HGNC:33732"/>
    </source>
</evidence>
<comment type="function">
    <text evidence="1">Regulates phosphatase activity of protein phosphatase 1 (PP1) complexes in the testis.</text>
</comment>
<comment type="subunit">
    <text evidence="1">Interacts with PPP1CC isoform gamma-2; the interaction is direct. Interacts with actin, dynein, KIF5B, KIFC1 and tubulin. Associates with microtubules (By similarity).</text>
</comment>
<comment type="subcellular location">
    <subcellularLocation>
        <location evidence="1">Cytoplasm</location>
        <location evidence="1">Cytoskeleton</location>
    </subcellularLocation>
    <subcellularLocation>
        <location evidence="1">Cytoplasm</location>
        <location evidence="1">Cytoskeleton</location>
        <location evidence="1">Microtubule organizing center</location>
        <location evidence="1">Centrosome</location>
    </subcellularLocation>
    <text evidence="1">Colocalizes with alpha tubulin to the manchette of developing spermatids. Detected to nuclear rim in pachytene spermatocytes. Detected at nuclear surface, opposite the acrosome in elongating spermatids. Detected at the microtubule-organizing center (MTOC). Localized to the centrosomal region of late-stage spermatids (By similarity).</text>
</comment>
<comment type="alternative products">
    <event type="alternative splicing"/>
    <isoform>
        <id>Q7Z4L9-1</id>
        <name>1</name>
        <sequence type="displayed"/>
    </isoform>
    <isoform>
        <id>Q7Z4L9-2</id>
        <name>2</name>
        <sequence type="described" ref="VSP_032587 VSP_032588"/>
    </isoform>
</comment>
<comment type="PTM">
    <text evidence="1">Phosphorylated; in the testis.</text>
</comment>
<organism>
    <name type="scientific">Homo sapiens</name>
    <name type="common">Human</name>
    <dbReference type="NCBI Taxonomy" id="9606"/>
    <lineage>
        <taxon>Eukaryota</taxon>
        <taxon>Metazoa</taxon>
        <taxon>Chordata</taxon>
        <taxon>Craniata</taxon>
        <taxon>Vertebrata</taxon>
        <taxon>Euteleostomi</taxon>
        <taxon>Mammalia</taxon>
        <taxon>Eutheria</taxon>
        <taxon>Euarchontoglires</taxon>
        <taxon>Primates</taxon>
        <taxon>Haplorrhini</taxon>
        <taxon>Catarrhini</taxon>
        <taxon>Hominidae</taxon>
        <taxon>Homo</taxon>
    </lineage>
</organism>
<gene>
    <name evidence="4" type="primary">PPP1R42</name>
    <name type="synonym">LRRC67</name>
</gene>
<name>PPR42_HUMAN</name>
<protein>
    <recommendedName>
        <fullName evidence="3">Protein phosphatase 1 regulatory subunit 42</fullName>
    </recommendedName>
    <alternativeName>
        <fullName evidence="3">Leucine-rich repeat-containing protein 67</fullName>
    </alternativeName>
</protein>
<proteinExistence type="evidence at transcript level"/>
<sequence length="309" mass="35480">MVRLTLDLIARNSNLKPRKEETISQCLKKITHINFSDKNIDAIEDLSLCKNLSVLYLYDNCISQITNLNYATNLTHLYLQNNCISCIENLRSLKKLEKLYLGGNYIAVIEGLEGLGELRELHVENQRLPLGEKLLFDPRTLHSLAKSLCILNISNNNIDDITDLELLENLNQLIAVDNQLLHVKDLEFLLNKLMKLWKIDLNGNPVCLKPKYRDRLILVSKSLEFLDGKEIKNIERQFLMNWKASKDAKKISKKRSSKNEDASNSLISNFKTMHHIVPVYYPQVGKPKLAFFSEIQRYPVNANASPESS</sequence>
<reference key="1">
    <citation type="journal article" date="2006" name="Nature">
        <title>DNA sequence and analysis of human chromosome 8.</title>
        <authorList>
            <person name="Nusbaum C."/>
            <person name="Mikkelsen T.S."/>
            <person name="Zody M.C."/>
            <person name="Asakawa S."/>
            <person name="Taudien S."/>
            <person name="Garber M."/>
            <person name="Kodira C.D."/>
            <person name="Schueler M.G."/>
            <person name="Shimizu A."/>
            <person name="Whittaker C.A."/>
            <person name="Chang J.L."/>
            <person name="Cuomo C.A."/>
            <person name="Dewar K."/>
            <person name="FitzGerald M.G."/>
            <person name="Yang X."/>
            <person name="Allen N.R."/>
            <person name="Anderson S."/>
            <person name="Asakawa T."/>
            <person name="Blechschmidt K."/>
            <person name="Bloom T."/>
            <person name="Borowsky M.L."/>
            <person name="Butler J."/>
            <person name="Cook A."/>
            <person name="Corum B."/>
            <person name="DeArellano K."/>
            <person name="DeCaprio D."/>
            <person name="Dooley K.T."/>
            <person name="Dorris L. III"/>
            <person name="Engels R."/>
            <person name="Gloeckner G."/>
            <person name="Hafez N."/>
            <person name="Hagopian D.S."/>
            <person name="Hall J.L."/>
            <person name="Ishikawa S.K."/>
            <person name="Jaffe D.B."/>
            <person name="Kamat A."/>
            <person name="Kudoh J."/>
            <person name="Lehmann R."/>
            <person name="Lokitsang T."/>
            <person name="Macdonald P."/>
            <person name="Major J.E."/>
            <person name="Matthews C.D."/>
            <person name="Mauceli E."/>
            <person name="Menzel U."/>
            <person name="Mihalev A.H."/>
            <person name="Minoshima S."/>
            <person name="Murayama Y."/>
            <person name="Naylor J.W."/>
            <person name="Nicol R."/>
            <person name="Nguyen C."/>
            <person name="O'Leary S.B."/>
            <person name="O'Neill K."/>
            <person name="Parker S.C.J."/>
            <person name="Polley A."/>
            <person name="Raymond C.K."/>
            <person name="Reichwald K."/>
            <person name="Rodriguez J."/>
            <person name="Sasaki T."/>
            <person name="Schilhabel M."/>
            <person name="Siddiqui R."/>
            <person name="Smith C.L."/>
            <person name="Sneddon T.P."/>
            <person name="Talamas J.A."/>
            <person name="Tenzin P."/>
            <person name="Topham K."/>
            <person name="Venkataraman V."/>
            <person name="Wen G."/>
            <person name="Yamazaki S."/>
            <person name="Young S.K."/>
            <person name="Zeng Q."/>
            <person name="Zimmer A.R."/>
            <person name="Rosenthal A."/>
            <person name="Birren B.W."/>
            <person name="Platzer M."/>
            <person name="Shimizu N."/>
            <person name="Lander E.S."/>
        </authorList>
    </citation>
    <scope>NUCLEOTIDE SEQUENCE [LARGE SCALE GENOMIC DNA]</scope>
</reference>
<reference key="2">
    <citation type="submission" date="2005-07" db="EMBL/GenBank/DDBJ databases">
        <authorList>
            <person name="Mural R.J."/>
            <person name="Istrail S."/>
            <person name="Sutton G."/>
            <person name="Florea L."/>
            <person name="Halpern A.L."/>
            <person name="Mobarry C.M."/>
            <person name="Lippert R."/>
            <person name="Walenz B."/>
            <person name="Shatkay H."/>
            <person name="Dew I."/>
            <person name="Miller J.R."/>
            <person name="Flanigan M.J."/>
            <person name="Edwards N.J."/>
            <person name="Bolanos R."/>
            <person name="Fasulo D."/>
            <person name="Halldorsson B.V."/>
            <person name="Hannenhalli S."/>
            <person name="Turner R."/>
            <person name="Yooseph S."/>
            <person name="Lu F."/>
            <person name="Nusskern D.R."/>
            <person name="Shue B.C."/>
            <person name="Zheng X.H."/>
            <person name="Zhong F."/>
            <person name="Delcher A.L."/>
            <person name="Huson D.H."/>
            <person name="Kravitz S.A."/>
            <person name="Mouchard L."/>
            <person name="Reinert K."/>
            <person name="Remington K.A."/>
            <person name="Clark A.G."/>
            <person name="Waterman M.S."/>
            <person name="Eichler E.E."/>
            <person name="Adams M.D."/>
            <person name="Hunkapiller M.W."/>
            <person name="Myers E.W."/>
            <person name="Venter J.C."/>
        </authorList>
    </citation>
    <scope>NUCLEOTIDE SEQUENCE [LARGE SCALE GENOMIC DNA]</scope>
</reference>
<reference key="3">
    <citation type="journal article" date="2004" name="Genome Res.">
        <title>The status, quality, and expansion of the NIH full-length cDNA project: the Mammalian Gene Collection (MGC).</title>
        <authorList>
            <consortium name="The MGC Project Team"/>
        </authorList>
    </citation>
    <scope>NUCLEOTIDE SEQUENCE [LARGE SCALE MRNA] (ISOFORM 2)</scope>
    <source>
        <tissue>Testis</tissue>
    </source>
</reference>
<feature type="chain" id="PRO_0000326175" description="Protein phosphatase 1 regulatory subunit 42">
    <location>
        <begin position="1"/>
        <end position="309"/>
    </location>
</feature>
<feature type="repeat" description="LRR 1">
    <location>
        <begin position="29"/>
        <end position="50"/>
    </location>
</feature>
<feature type="repeat" description="LRR 2">
    <location>
        <begin position="51"/>
        <end position="72"/>
    </location>
</feature>
<feature type="repeat" description="LRR 3">
    <location>
        <begin position="73"/>
        <end position="94"/>
    </location>
</feature>
<feature type="repeat" description="LRR 4">
    <location>
        <begin position="95"/>
        <end position="116"/>
    </location>
</feature>
<feature type="repeat" description="LRR 5">
    <location>
        <begin position="117"/>
        <end position="138"/>
    </location>
</feature>
<feature type="repeat" description="LRR 6">
    <location>
        <begin position="147"/>
        <end position="168"/>
    </location>
</feature>
<feature type="repeat" description="LRR 7">
    <location>
        <begin position="169"/>
        <end position="190"/>
    </location>
</feature>
<feature type="domain" description="LRRCT">
    <location>
        <begin position="204"/>
        <end position="242"/>
    </location>
</feature>
<feature type="splice variant" id="VSP_032587" description="In isoform 2." evidence="2">
    <original>EFLDG</original>
    <variation>GTYLY</variation>
    <location>
        <begin position="224"/>
        <end position="228"/>
    </location>
</feature>
<feature type="splice variant" id="VSP_032588" description="In isoform 2." evidence="2">
    <location>
        <begin position="229"/>
        <end position="309"/>
    </location>
</feature>
<keyword id="KW-0025">Alternative splicing</keyword>
<keyword id="KW-0963">Cytoplasm</keyword>
<keyword id="KW-0206">Cytoskeleton</keyword>
<keyword id="KW-0433">Leucine-rich repeat</keyword>
<keyword id="KW-1185">Reference proteome</keyword>
<keyword id="KW-0677">Repeat</keyword>
<dbReference type="EMBL" id="AC110998">
    <property type="status" value="NOT_ANNOTATED_CDS"/>
    <property type="molecule type" value="Genomic_DNA"/>
</dbReference>
<dbReference type="EMBL" id="CH471068">
    <property type="protein sequence ID" value="EAW86927.1"/>
    <property type="molecule type" value="Genomic_DNA"/>
</dbReference>
<dbReference type="EMBL" id="BC055413">
    <property type="protein sequence ID" value="AAH55413.1"/>
    <property type="molecule type" value="mRNA"/>
</dbReference>
<dbReference type="CCDS" id="CCDS34902.1">
    <molecule id="Q7Z4L9-2"/>
</dbReference>
<dbReference type="RefSeq" id="NP_001013648.1">
    <molecule id="Q7Z4L9-2"/>
    <property type="nucleotide sequence ID" value="NM_001013626.4"/>
</dbReference>
<dbReference type="RefSeq" id="NP_001335492.1">
    <property type="nucleotide sequence ID" value="NM_001348563.1"/>
</dbReference>
<dbReference type="SMR" id="Q7Z4L9"/>
<dbReference type="BioGRID" id="130328">
    <property type="interactions" value="2"/>
</dbReference>
<dbReference type="FunCoup" id="Q7Z4L9">
    <property type="interactions" value="98"/>
</dbReference>
<dbReference type="IntAct" id="Q7Z4L9">
    <property type="interactions" value="3"/>
</dbReference>
<dbReference type="MINT" id="Q7Z4L9"/>
<dbReference type="STRING" id="9606.ENSP00000315035"/>
<dbReference type="iPTMnet" id="Q7Z4L9"/>
<dbReference type="PhosphoSitePlus" id="Q7Z4L9"/>
<dbReference type="BioMuta" id="PPP1R42"/>
<dbReference type="DMDM" id="172045913"/>
<dbReference type="MassIVE" id="Q7Z4L9"/>
<dbReference type="PaxDb" id="9606-ENSP00000315035"/>
<dbReference type="PeptideAtlas" id="Q7Z4L9"/>
<dbReference type="ProteomicsDB" id="32229"/>
<dbReference type="ProteomicsDB" id="69209">
    <molecule id="Q7Z4L9-1"/>
</dbReference>
<dbReference type="ProteomicsDB" id="69210">
    <molecule id="Q7Z4L9-2"/>
</dbReference>
<dbReference type="Antibodypedia" id="12079">
    <property type="antibodies" value="89 antibodies from 20 providers"/>
</dbReference>
<dbReference type="DNASU" id="286187"/>
<dbReference type="Ensembl" id="ENST00000324682.5">
    <molecule id="Q7Z4L9-2"/>
    <property type="protein sequence ID" value="ENSP00000315035.5"/>
    <property type="gene ID" value="ENSG00000178125.15"/>
</dbReference>
<dbReference type="Ensembl" id="ENST00000522909.5">
    <molecule id="Q7Z4L9-1"/>
    <property type="protein sequence ID" value="ENSP00000429721.1"/>
    <property type="gene ID" value="ENSG00000178125.15"/>
</dbReference>
<dbReference type="GeneID" id="286187"/>
<dbReference type="KEGG" id="hsa:286187"/>
<dbReference type="UCSC" id="uc003xxc.4">
    <molecule id="Q7Z4L9-1"/>
    <property type="organism name" value="human"/>
</dbReference>
<dbReference type="UCSC" id="uc064nlc.1">
    <property type="organism name" value="human"/>
</dbReference>
<dbReference type="AGR" id="HGNC:33732"/>
<dbReference type="CTD" id="286187"/>
<dbReference type="DisGeNET" id="286187"/>
<dbReference type="GeneCards" id="PPP1R42"/>
<dbReference type="HGNC" id="HGNC:33732">
    <property type="gene designation" value="PPP1R42"/>
</dbReference>
<dbReference type="HPA" id="ENSG00000178125">
    <property type="expression patterns" value="Group enriched (fallopian tube, testis)"/>
</dbReference>
<dbReference type="MIM" id="617720">
    <property type="type" value="gene"/>
</dbReference>
<dbReference type="neXtProt" id="NX_Q7Z4L9"/>
<dbReference type="OpenTargets" id="ENSG00000178125"/>
<dbReference type="PharmGKB" id="PA162394588"/>
<dbReference type="VEuPathDB" id="HostDB:ENSG00000178125"/>
<dbReference type="eggNOG" id="KOG2769">
    <property type="taxonomic scope" value="Eukaryota"/>
</dbReference>
<dbReference type="GeneTree" id="ENSGT00940000158260"/>
<dbReference type="HOGENOM" id="CLU_062444_0_0_1"/>
<dbReference type="InParanoid" id="Q7Z4L9"/>
<dbReference type="OMA" id="RRFLMNW"/>
<dbReference type="OrthoDB" id="10262005at2759"/>
<dbReference type="PAN-GO" id="Q7Z4L9">
    <property type="GO annotations" value="3 GO annotations based on evolutionary models"/>
</dbReference>
<dbReference type="PhylomeDB" id="Q7Z4L9"/>
<dbReference type="TreeFam" id="TF329227"/>
<dbReference type="PathwayCommons" id="Q7Z4L9"/>
<dbReference type="SignaLink" id="Q7Z4L9"/>
<dbReference type="BioGRID-ORCS" id="286187">
    <property type="hits" value="11 hits in 1114 CRISPR screens"/>
</dbReference>
<dbReference type="ChiTaRS" id="PPP1R42">
    <property type="organism name" value="human"/>
</dbReference>
<dbReference type="GenomeRNAi" id="286187"/>
<dbReference type="Pharos" id="Q7Z4L9">
    <property type="development level" value="Tbio"/>
</dbReference>
<dbReference type="PRO" id="PR:Q7Z4L9"/>
<dbReference type="Proteomes" id="UP000005640">
    <property type="component" value="Chromosome 8"/>
</dbReference>
<dbReference type="RNAct" id="Q7Z4L9">
    <property type="molecule type" value="protein"/>
</dbReference>
<dbReference type="Bgee" id="ENSG00000178125">
    <property type="expression patterns" value="Expressed in right uterine tube and 91 other cell types or tissues"/>
</dbReference>
<dbReference type="GO" id="GO:0005813">
    <property type="term" value="C:centrosome"/>
    <property type="evidence" value="ECO:0000250"/>
    <property type="project" value="UniProtKB"/>
</dbReference>
<dbReference type="GO" id="GO:0005737">
    <property type="term" value="C:cytoplasm"/>
    <property type="evidence" value="ECO:0007669"/>
    <property type="project" value="UniProtKB-KW"/>
</dbReference>
<dbReference type="GO" id="GO:0002177">
    <property type="term" value="C:manchette"/>
    <property type="evidence" value="ECO:0000250"/>
    <property type="project" value="UniProtKB"/>
</dbReference>
<dbReference type="GO" id="GO:0015630">
    <property type="term" value="C:microtubule cytoskeleton"/>
    <property type="evidence" value="ECO:0000250"/>
    <property type="project" value="UniProtKB"/>
</dbReference>
<dbReference type="GO" id="GO:0005815">
    <property type="term" value="C:microtubule organizing center"/>
    <property type="evidence" value="ECO:0000250"/>
    <property type="project" value="UniProtKB"/>
</dbReference>
<dbReference type="GO" id="GO:0003779">
    <property type="term" value="F:actin binding"/>
    <property type="evidence" value="ECO:0000250"/>
    <property type="project" value="UniProtKB"/>
</dbReference>
<dbReference type="GO" id="GO:0070840">
    <property type="term" value="F:dynein complex binding"/>
    <property type="evidence" value="ECO:0000250"/>
    <property type="project" value="UniProtKB"/>
</dbReference>
<dbReference type="GO" id="GO:0015631">
    <property type="term" value="F:tubulin binding"/>
    <property type="evidence" value="ECO:0000250"/>
    <property type="project" value="UniProtKB"/>
</dbReference>
<dbReference type="CDD" id="cd21340">
    <property type="entry name" value="PPP1R42"/>
    <property type="match status" value="1"/>
</dbReference>
<dbReference type="FunFam" id="3.80.10.10:FF:000293">
    <property type="entry name" value="Protein phosphatase 1 regulatory subunit 42"/>
    <property type="match status" value="1"/>
</dbReference>
<dbReference type="FunFam" id="3.80.10.10:FF:000201">
    <property type="entry name" value="protein phosphatase 1 regulatory subunit 42"/>
    <property type="match status" value="1"/>
</dbReference>
<dbReference type="Gene3D" id="3.80.10.10">
    <property type="entry name" value="Ribonuclease Inhibitor"/>
    <property type="match status" value="2"/>
</dbReference>
<dbReference type="InterPro" id="IPR001611">
    <property type="entry name" value="Leu-rich_rpt"/>
</dbReference>
<dbReference type="InterPro" id="IPR025875">
    <property type="entry name" value="Leu-rich_rpt_4"/>
</dbReference>
<dbReference type="InterPro" id="IPR032675">
    <property type="entry name" value="LRR_dom_sf"/>
</dbReference>
<dbReference type="InterPro" id="IPR050836">
    <property type="entry name" value="SDS22/Internalin_LRR"/>
</dbReference>
<dbReference type="PANTHER" id="PTHR46652">
    <property type="entry name" value="LEUCINE-RICH REPEAT AND IQ DOMAIN-CONTAINING PROTEIN 1-RELATED"/>
    <property type="match status" value="1"/>
</dbReference>
<dbReference type="PANTHER" id="PTHR46652:SF3">
    <property type="entry name" value="LEUCINE-RICH REPEAT-CONTAINING PROTEIN 9"/>
    <property type="match status" value="1"/>
</dbReference>
<dbReference type="Pfam" id="PF12799">
    <property type="entry name" value="LRR_4"/>
    <property type="match status" value="1"/>
</dbReference>
<dbReference type="Pfam" id="PF14580">
    <property type="entry name" value="LRR_9"/>
    <property type="match status" value="1"/>
</dbReference>
<dbReference type="SMART" id="SM00365">
    <property type="entry name" value="LRR_SD22"/>
    <property type="match status" value="5"/>
</dbReference>
<dbReference type="SUPFAM" id="SSF52058">
    <property type="entry name" value="L domain-like"/>
    <property type="match status" value="1"/>
</dbReference>
<dbReference type="PROSITE" id="PS51450">
    <property type="entry name" value="LRR"/>
    <property type="match status" value="6"/>
</dbReference>
<accession>Q7Z4L9</accession>
<accession>G3V118</accession>